<protein>
    <recommendedName>
        <fullName>Probable alpha-1,2-galactosyltransferase gmh2</fullName>
        <ecNumber>2.4.1.-</ecNumber>
    </recommendedName>
</protein>
<name>GMH2_SCHPO</name>
<keyword id="KW-0325">Glycoprotein</keyword>
<keyword id="KW-0328">Glycosyltransferase</keyword>
<keyword id="KW-0333">Golgi apparatus</keyword>
<keyword id="KW-0472">Membrane</keyword>
<keyword id="KW-1185">Reference proteome</keyword>
<keyword id="KW-0735">Signal-anchor</keyword>
<keyword id="KW-0808">Transferase</keyword>
<keyword id="KW-0812">Transmembrane</keyword>
<keyword id="KW-1133">Transmembrane helix</keyword>
<reference key="1">
    <citation type="journal article" date="2002" name="Nature">
        <title>The genome sequence of Schizosaccharomyces pombe.</title>
        <authorList>
            <person name="Wood V."/>
            <person name="Gwilliam R."/>
            <person name="Rajandream M.A."/>
            <person name="Lyne M.H."/>
            <person name="Lyne R."/>
            <person name="Stewart A."/>
            <person name="Sgouros J.G."/>
            <person name="Peat N."/>
            <person name="Hayles J."/>
            <person name="Baker S.G."/>
            <person name="Basham D."/>
            <person name="Bowman S."/>
            <person name="Brooks K."/>
            <person name="Brown D."/>
            <person name="Brown S."/>
            <person name="Chillingworth T."/>
            <person name="Churcher C.M."/>
            <person name="Collins M."/>
            <person name="Connor R."/>
            <person name="Cronin A."/>
            <person name="Davis P."/>
            <person name="Feltwell T."/>
            <person name="Fraser A."/>
            <person name="Gentles S."/>
            <person name="Goble A."/>
            <person name="Hamlin N."/>
            <person name="Harris D.E."/>
            <person name="Hidalgo J."/>
            <person name="Hodgson G."/>
            <person name="Holroyd S."/>
            <person name="Hornsby T."/>
            <person name="Howarth S."/>
            <person name="Huckle E.J."/>
            <person name="Hunt S."/>
            <person name="Jagels K."/>
            <person name="James K.D."/>
            <person name="Jones L."/>
            <person name="Jones M."/>
            <person name="Leather S."/>
            <person name="McDonald S."/>
            <person name="McLean J."/>
            <person name="Mooney P."/>
            <person name="Moule S."/>
            <person name="Mungall K.L."/>
            <person name="Murphy L.D."/>
            <person name="Niblett D."/>
            <person name="Odell C."/>
            <person name="Oliver K."/>
            <person name="O'Neil S."/>
            <person name="Pearson D."/>
            <person name="Quail M.A."/>
            <person name="Rabbinowitsch E."/>
            <person name="Rutherford K.M."/>
            <person name="Rutter S."/>
            <person name="Saunders D."/>
            <person name="Seeger K."/>
            <person name="Sharp S."/>
            <person name="Skelton J."/>
            <person name="Simmonds M.N."/>
            <person name="Squares R."/>
            <person name="Squares S."/>
            <person name="Stevens K."/>
            <person name="Taylor K."/>
            <person name="Taylor R.G."/>
            <person name="Tivey A."/>
            <person name="Walsh S.V."/>
            <person name="Warren T."/>
            <person name="Whitehead S."/>
            <person name="Woodward J.R."/>
            <person name="Volckaert G."/>
            <person name="Aert R."/>
            <person name="Robben J."/>
            <person name="Grymonprez B."/>
            <person name="Weltjens I."/>
            <person name="Vanstreels E."/>
            <person name="Rieger M."/>
            <person name="Schaefer M."/>
            <person name="Mueller-Auer S."/>
            <person name="Gabel C."/>
            <person name="Fuchs M."/>
            <person name="Duesterhoeft A."/>
            <person name="Fritzc C."/>
            <person name="Holzer E."/>
            <person name="Moestl D."/>
            <person name="Hilbert H."/>
            <person name="Borzym K."/>
            <person name="Langer I."/>
            <person name="Beck A."/>
            <person name="Lehrach H."/>
            <person name="Reinhardt R."/>
            <person name="Pohl T.M."/>
            <person name="Eger P."/>
            <person name="Zimmermann W."/>
            <person name="Wedler H."/>
            <person name="Wambutt R."/>
            <person name="Purnelle B."/>
            <person name="Goffeau A."/>
            <person name="Cadieu E."/>
            <person name="Dreano S."/>
            <person name="Gloux S."/>
            <person name="Lelaure V."/>
            <person name="Mottier S."/>
            <person name="Galibert F."/>
            <person name="Aves S.J."/>
            <person name="Xiang Z."/>
            <person name="Hunt C."/>
            <person name="Moore K."/>
            <person name="Hurst S.M."/>
            <person name="Lucas M."/>
            <person name="Rochet M."/>
            <person name="Gaillardin C."/>
            <person name="Tallada V.A."/>
            <person name="Garzon A."/>
            <person name="Thode G."/>
            <person name="Daga R.R."/>
            <person name="Cruzado L."/>
            <person name="Jimenez J."/>
            <person name="Sanchez M."/>
            <person name="del Rey F."/>
            <person name="Benito J."/>
            <person name="Dominguez A."/>
            <person name="Revuelta J.L."/>
            <person name="Moreno S."/>
            <person name="Armstrong J."/>
            <person name="Forsburg S.L."/>
            <person name="Cerutti L."/>
            <person name="Lowe T."/>
            <person name="McCombie W.R."/>
            <person name="Paulsen I."/>
            <person name="Potashkin J."/>
            <person name="Shpakovski G.V."/>
            <person name="Ussery D."/>
            <person name="Barrell B.G."/>
            <person name="Nurse P."/>
        </authorList>
    </citation>
    <scope>NUCLEOTIDE SEQUENCE [LARGE SCALE GENOMIC DNA]</scope>
    <source>
        <strain>972 / ATCC 24843</strain>
    </source>
</reference>
<evidence type="ECO:0000255" key="1"/>
<evidence type="ECO:0000305" key="2"/>
<proteinExistence type="inferred from homology"/>
<comment type="subcellular location">
    <subcellularLocation>
        <location evidence="2">Golgi apparatus membrane</location>
        <topology evidence="2">Single-pass type II membrane protein</topology>
    </subcellularLocation>
</comment>
<comment type="similarity">
    <text evidence="2">Belongs to the glycosyltransferase 34 family.</text>
</comment>
<accession>Q09681</accession>
<feature type="chain" id="PRO_0000215167" description="Probable alpha-1,2-galactosyltransferase gmh2">
    <location>
        <begin position="1"/>
        <end position="346"/>
    </location>
</feature>
<feature type="topological domain" description="Cytoplasmic" evidence="1">
    <location>
        <begin position="1"/>
        <end position="11"/>
    </location>
</feature>
<feature type="transmembrane region" description="Helical; Signal-anchor for type II membrane protein" evidence="1">
    <location>
        <begin position="12"/>
        <end position="32"/>
    </location>
</feature>
<feature type="topological domain" description="Lumenal" evidence="1">
    <location>
        <begin position="33"/>
        <end position="346"/>
    </location>
</feature>
<feature type="glycosylation site" description="N-linked (GlcNAc...) asparagine" evidence="1">
    <location>
        <position position="64"/>
    </location>
</feature>
<feature type="glycosylation site" description="N-linked (GlcNAc...) asparagine" evidence="1">
    <location>
        <position position="142"/>
    </location>
</feature>
<feature type="glycosylation site" description="N-linked (GlcNAc...) asparagine" evidence="1">
    <location>
        <position position="224"/>
    </location>
</feature>
<gene>
    <name type="primary">gmh2</name>
    <name type="ORF">SPAC5H10.13c</name>
</gene>
<sequence length="346" mass="39108">MALMLSRIPRRFFFLFLTVGLIAGAFLYSLIYFVDVDLVSKVNQLYDQQIAPMLSDAIGTPSVNHSFELAPLDSHLVATSTTFHEASYESEPQQNPASQNIVLLLVSDGHTSYNNGANTFEEAIQNRVDYSTKQNYNFEYVNVTGLPIPAVWSKMPAVLQTMKKYPKAEWIWLLDQDAIITNTHLSLQDSFLKPENLQKTLITNTILTKRPINANGDLRYTPSNYSLKDIENLMVIISQDHNGLNAGSILFRNSPATALFLDIWTDPVVAECAKANNEQDMLGYLISKHSQLASLVGLIPQRKINAFHEGPENMEWQKGDLVIHFAGCWVENRCDELWQKFYALID</sequence>
<organism>
    <name type="scientific">Schizosaccharomyces pombe (strain 972 / ATCC 24843)</name>
    <name type="common">Fission yeast</name>
    <dbReference type="NCBI Taxonomy" id="284812"/>
    <lineage>
        <taxon>Eukaryota</taxon>
        <taxon>Fungi</taxon>
        <taxon>Dikarya</taxon>
        <taxon>Ascomycota</taxon>
        <taxon>Taphrinomycotina</taxon>
        <taxon>Schizosaccharomycetes</taxon>
        <taxon>Schizosaccharomycetales</taxon>
        <taxon>Schizosaccharomycetaceae</taxon>
        <taxon>Schizosaccharomyces</taxon>
    </lineage>
</organism>
<dbReference type="EC" id="2.4.1.-"/>
<dbReference type="EMBL" id="CU329670">
    <property type="protein sequence ID" value="CAA89963.1"/>
    <property type="molecule type" value="Genomic_DNA"/>
</dbReference>
<dbReference type="PIR" id="T38977">
    <property type="entry name" value="S55491"/>
</dbReference>
<dbReference type="RefSeq" id="NP_592826.1">
    <property type="nucleotide sequence ID" value="NM_001018226.2"/>
</dbReference>
<dbReference type="SMR" id="Q09681"/>
<dbReference type="BioGRID" id="278700">
    <property type="interactions" value="44"/>
</dbReference>
<dbReference type="FunCoup" id="Q09681">
    <property type="interactions" value="116"/>
</dbReference>
<dbReference type="STRING" id="284812.Q09681"/>
<dbReference type="CAZy" id="GT34">
    <property type="family name" value="Glycosyltransferase Family 34"/>
</dbReference>
<dbReference type="GlyCosmos" id="Q09681">
    <property type="glycosylation" value="3 sites, No reported glycans"/>
</dbReference>
<dbReference type="iPTMnet" id="Q09681"/>
<dbReference type="PaxDb" id="4896-SPAC5H10.13c.1"/>
<dbReference type="EnsemblFungi" id="SPAC5H10.13c.1">
    <property type="protein sequence ID" value="SPAC5H10.13c.1:pep"/>
    <property type="gene ID" value="SPAC5H10.13c"/>
</dbReference>
<dbReference type="GeneID" id="2542227"/>
<dbReference type="KEGG" id="spo:2542227"/>
<dbReference type="PomBase" id="SPAC5H10.13c">
    <property type="gene designation" value="gmh2"/>
</dbReference>
<dbReference type="VEuPathDB" id="FungiDB:SPAC5H10.13c"/>
<dbReference type="eggNOG" id="KOG4748">
    <property type="taxonomic scope" value="Eukaryota"/>
</dbReference>
<dbReference type="HOGENOM" id="CLU_021434_2_0_1"/>
<dbReference type="InParanoid" id="Q09681"/>
<dbReference type="OMA" id="HEASYES"/>
<dbReference type="PhylomeDB" id="Q09681"/>
<dbReference type="PRO" id="PR:Q09681"/>
<dbReference type="Proteomes" id="UP000002485">
    <property type="component" value="Chromosome I"/>
</dbReference>
<dbReference type="GO" id="GO:0000139">
    <property type="term" value="C:Golgi membrane"/>
    <property type="evidence" value="ECO:0000318"/>
    <property type="project" value="GO_Central"/>
</dbReference>
<dbReference type="GO" id="GO:0031278">
    <property type="term" value="F:alpha-1,2-galactosyltransferase activity"/>
    <property type="evidence" value="ECO:0000269"/>
    <property type="project" value="PomBase"/>
</dbReference>
<dbReference type="GO" id="GO:0006487">
    <property type="term" value="P:protein N-linked glycosylation"/>
    <property type="evidence" value="ECO:0000315"/>
    <property type="project" value="PomBase"/>
</dbReference>
<dbReference type="GO" id="GO:0018279">
    <property type="term" value="P:protein N-linked glycosylation via asparagine"/>
    <property type="evidence" value="ECO:0000269"/>
    <property type="project" value="PomBase"/>
</dbReference>
<dbReference type="FunFam" id="3.90.550.10:FF:000149">
    <property type="entry name" value="Alpha-1,6-mannosyltransferase subunit"/>
    <property type="match status" value="1"/>
</dbReference>
<dbReference type="Gene3D" id="3.90.550.10">
    <property type="entry name" value="Spore Coat Polysaccharide Biosynthesis Protein SpsA, Chain A"/>
    <property type="match status" value="1"/>
</dbReference>
<dbReference type="InterPro" id="IPR008630">
    <property type="entry name" value="Glyco_trans_34"/>
</dbReference>
<dbReference type="InterPro" id="IPR029044">
    <property type="entry name" value="Nucleotide-diphossugar_trans"/>
</dbReference>
<dbReference type="PANTHER" id="PTHR31306:SF2">
    <property type="entry name" value="ALPHA-1,2-GALACTOSYLTRANSFERASE GMH3-RELATED"/>
    <property type="match status" value="1"/>
</dbReference>
<dbReference type="PANTHER" id="PTHR31306">
    <property type="entry name" value="ALPHA-1,6-MANNOSYLTRANSFERASE MNN11-RELATED"/>
    <property type="match status" value="1"/>
</dbReference>
<dbReference type="Pfam" id="PF05637">
    <property type="entry name" value="Glyco_transf_34"/>
    <property type="match status" value="1"/>
</dbReference>